<name>VKGC_HUMAN</name>
<proteinExistence type="evidence at protein level"/>
<protein>
    <recommendedName>
        <fullName>Vitamin K-dependent gamma-carboxylase</fullName>
        <ecNumber evidence="10">4.1.1.90</ecNumber>
    </recommendedName>
    <alternativeName>
        <fullName>Gamma-glutamyl carboxylase</fullName>
    </alternativeName>
    <alternativeName>
        <fullName>Peptidyl-glutamate 4-carboxylase</fullName>
    </alternativeName>
    <alternativeName>
        <fullName>Vitamin K gamma glutamyl carboxylase</fullName>
    </alternativeName>
</protein>
<feature type="initiator methionine" description="Removed" evidence="17 18">
    <location>
        <position position="1"/>
    </location>
</feature>
<feature type="chain" id="PRO_0000191823" description="Vitamin K-dependent gamma-carboxylase">
    <location>
        <begin position="2"/>
        <end position="758"/>
    </location>
</feature>
<feature type="topological domain" description="Cytoplasmic" evidence="2">
    <location>
        <begin position="2"/>
        <end position="60"/>
    </location>
</feature>
<feature type="transmembrane region" description="Helical" evidence="2">
    <location>
        <begin position="61"/>
        <end position="81"/>
    </location>
</feature>
<feature type="topological domain" description="Lumenal" evidence="2">
    <location>
        <begin position="82"/>
        <end position="113"/>
    </location>
</feature>
<feature type="transmembrane region" description="Helical" evidence="2">
    <location>
        <begin position="114"/>
        <end position="134"/>
    </location>
</feature>
<feature type="topological domain" description="Cytoplasmic" evidence="2">
    <location>
        <begin position="135"/>
        <end position="136"/>
    </location>
</feature>
<feature type="transmembrane region" description="Helical" evidence="2">
    <location>
        <begin position="137"/>
        <end position="157"/>
    </location>
</feature>
<feature type="topological domain" description="Lumenal" evidence="2">
    <location>
        <begin position="158"/>
        <end position="292"/>
    </location>
</feature>
<feature type="transmembrane region" description="Helical" evidence="2">
    <location>
        <begin position="293"/>
        <end position="313"/>
    </location>
</feature>
<feature type="topological domain" description="Cytoplasmic" evidence="2">
    <location>
        <begin position="314"/>
        <end position="361"/>
    </location>
</feature>
<feature type="transmembrane region" description="Helical" evidence="2">
    <location>
        <begin position="362"/>
        <end position="382"/>
    </location>
</feature>
<feature type="topological domain" description="Lumenal" evidence="2">
    <location>
        <begin position="383"/>
        <end position="758"/>
    </location>
</feature>
<feature type="region of interest" description="Disordered" evidence="3">
    <location>
        <begin position="1"/>
        <end position="22"/>
    </location>
</feature>
<feature type="region of interest" description="Disordered" evidence="3">
    <location>
        <begin position="732"/>
        <end position="758"/>
    </location>
</feature>
<feature type="compositionally biased region" description="Polar residues" evidence="3">
    <location>
        <begin position="735"/>
        <end position="747"/>
    </location>
</feature>
<feature type="active site" description="Proton acceptor" evidence="10">
    <location>
        <position position="218"/>
    </location>
</feature>
<feature type="modified residue" description="N-acetylalanine" evidence="17 18">
    <location>
        <position position="2"/>
    </location>
</feature>
<feature type="glycosylation site" description="N-linked (GlcNAc...) asparagine" evidence="13">
    <location>
        <position position="459"/>
    </location>
</feature>
<feature type="glycosylation site" description="N-linked (GlcNAc...) asparagine" evidence="13">
    <location>
        <position position="550"/>
    </location>
</feature>
<feature type="disulfide bond" evidence="8">
    <location>
        <begin position="99"/>
        <end position="450"/>
    </location>
</feature>
<feature type="splice variant" id="VSP_046179" description="In isoform 2." evidence="15">
    <location>
        <begin position="15"/>
        <end position="71"/>
    </location>
</feature>
<feature type="sequence variant" id="VAR_032979" description="In PXEL-MCFD; dbSNP:rs121909677." evidence="11">
    <original>F</original>
    <variation>S</variation>
    <location>
        <position position="299"/>
    </location>
</feature>
<feature type="sequence variant" id="VAR_005780" description="In dbSNP:rs699664." evidence="12">
    <original>R</original>
    <variation>Q</variation>
    <location>
        <position position="325"/>
    </location>
</feature>
<feature type="sequence variant" id="VAR_005781" description="In VKCFD1; affects glutamate binding; dbSNP:rs121909675." evidence="5 14">
    <original>L</original>
    <variation>R</variation>
    <location>
        <position position="394"/>
    </location>
</feature>
<feature type="sequence variant" id="VAR_032980" description="In PXEL-MCFD; dbSNP:rs121909681." evidence="11">
    <original>R</original>
    <variation>C</variation>
    <location>
        <position position="476"/>
    </location>
</feature>
<feature type="sequence variant" id="VAR_032981" description="In PXEL-MCFD; dbSNP:rs121909682." evidence="11">
    <original>R</original>
    <variation>H</variation>
    <location>
        <position position="476"/>
    </location>
</feature>
<feature type="sequence variant" id="VAR_021826" description="In VKCFD1; dbSNP:rs121909676." evidence="9">
    <original>R</original>
    <variation>P</variation>
    <location>
        <position position="485"/>
    </location>
</feature>
<feature type="sequence variant" id="VAR_032982" description="In PXEL-MCFD; dbSNP:rs121909679." evidence="11">
    <original>W</original>
    <variation>S</variation>
    <location>
        <position position="493"/>
    </location>
</feature>
<feature type="sequence variant" id="VAR_015218" description="In VKCFD1; dbSNP:rs28928872." evidence="6">
    <original>W</original>
    <variation>S</variation>
    <location>
        <position position="501"/>
    </location>
</feature>
<feature type="sequence variant" id="VAR_032983" description="In PXEL-MCFD; dbSNP:rs121909678." evidence="11">
    <original>G</original>
    <variation>R</variation>
    <location>
        <position position="558"/>
    </location>
</feature>
<feature type="mutagenesis site" description="No effect on activity." evidence="10">
    <original>H</original>
    <variation>A</variation>
    <location>
        <position position="160"/>
    </location>
</feature>
<feature type="mutagenesis site" description="No activity." evidence="10">
    <original>K</original>
    <variation>A</variation>
    <location>
        <position position="218"/>
    </location>
</feature>
<feature type="mutagenesis site" description="No effect on activity." evidence="10">
    <original>H</original>
    <variation>A</variation>
    <location>
        <position position="287"/>
    </location>
</feature>
<feature type="mutagenesis site" description="No effect on activity." evidence="10">
    <original>H</original>
    <variation>A</variation>
    <location>
        <position position="381"/>
    </location>
</feature>
<feature type="sequence conflict" description="In Ref. 3; AAA91834." evidence="16" ref="3">
    <original>D</original>
    <variation>N</variation>
    <location>
        <position position="400"/>
    </location>
</feature>
<feature type="sequence conflict" description="In Ref. 4; BAG59837." evidence="16" ref="4">
    <original>F</original>
    <variation>S</variation>
    <location>
        <position position="659"/>
    </location>
</feature>
<accession>P38435</accession>
<accession>B4DMC5</accession>
<accession>E9PEE1</accession>
<accession>Q14415</accession>
<accession>Q6GU45</accession>
<reference key="1">
    <citation type="journal article" date="1991" name="Science">
        <title>Cloning and expression of the cDNA for human gamma-glutamyl carboxylase.</title>
        <authorList>
            <person name="Wu S.-M."/>
            <person name="Cheung W.-F."/>
            <person name="Frazier D."/>
            <person name="Stafford D.W."/>
        </authorList>
    </citation>
    <scope>NUCLEOTIDE SEQUENCE [MRNA] (ISOFORM 1)</scope>
    <scope>VARIANT GLN-325</scope>
</reference>
<reference key="2">
    <citation type="journal article" date="1997" name="Blood">
        <title>Genomic sequence and transcription start site for the human gamma-glutamyl carboxylase.</title>
        <authorList>
            <person name="Wu S.-M."/>
            <person name="Stafford D.W."/>
            <person name="Frazier L.D."/>
            <person name="Fu Y.Y."/>
            <person name="High K.A."/>
            <person name="Chu K."/>
            <person name="Sanchez-Vega B."/>
            <person name="Solera J."/>
        </authorList>
    </citation>
    <scope>NUCLEOTIDE SEQUENCE [GENOMIC DNA]</scope>
</reference>
<reference key="3">
    <citation type="submission" date="1996-03" db="EMBL/GenBank/DDBJ databases">
        <authorList>
            <person name="Ying L."/>
            <person name="Lipsky J.J."/>
        </authorList>
    </citation>
    <scope>NUCLEOTIDE SEQUENCE [MRNA] (ISOFORM 1)</scope>
</reference>
<reference key="4">
    <citation type="journal article" date="2004" name="Nat. Genet.">
        <title>Complete sequencing and characterization of 21,243 full-length human cDNAs.</title>
        <authorList>
            <person name="Ota T."/>
            <person name="Suzuki Y."/>
            <person name="Nishikawa T."/>
            <person name="Otsuki T."/>
            <person name="Sugiyama T."/>
            <person name="Irie R."/>
            <person name="Wakamatsu A."/>
            <person name="Hayashi K."/>
            <person name="Sato H."/>
            <person name="Nagai K."/>
            <person name="Kimura K."/>
            <person name="Makita H."/>
            <person name="Sekine M."/>
            <person name="Obayashi M."/>
            <person name="Nishi T."/>
            <person name="Shibahara T."/>
            <person name="Tanaka T."/>
            <person name="Ishii S."/>
            <person name="Yamamoto J."/>
            <person name="Saito K."/>
            <person name="Kawai Y."/>
            <person name="Isono Y."/>
            <person name="Nakamura Y."/>
            <person name="Nagahari K."/>
            <person name="Murakami K."/>
            <person name="Yasuda T."/>
            <person name="Iwayanagi T."/>
            <person name="Wagatsuma M."/>
            <person name="Shiratori A."/>
            <person name="Sudo H."/>
            <person name="Hosoiri T."/>
            <person name="Kaku Y."/>
            <person name="Kodaira H."/>
            <person name="Kondo H."/>
            <person name="Sugawara M."/>
            <person name="Takahashi M."/>
            <person name="Kanda K."/>
            <person name="Yokoi T."/>
            <person name="Furuya T."/>
            <person name="Kikkawa E."/>
            <person name="Omura Y."/>
            <person name="Abe K."/>
            <person name="Kamihara K."/>
            <person name="Katsuta N."/>
            <person name="Sato K."/>
            <person name="Tanikawa M."/>
            <person name="Yamazaki M."/>
            <person name="Ninomiya K."/>
            <person name="Ishibashi T."/>
            <person name="Yamashita H."/>
            <person name="Murakawa K."/>
            <person name="Fujimori K."/>
            <person name="Tanai H."/>
            <person name="Kimata M."/>
            <person name="Watanabe M."/>
            <person name="Hiraoka S."/>
            <person name="Chiba Y."/>
            <person name="Ishida S."/>
            <person name="Ono Y."/>
            <person name="Takiguchi S."/>
            <person name="Watanabe S."/>
            <person name="Yosida M."/>
            <person name="Hotuta T."/>
            <person name="Kusano J."/>
            <person name="Kanehori K."/>
            <person name="Takahashi-Fujii A."/>
            <person name="Hara H."/>
            <person name="Tanase T.-O."/>
            <person name="Nomura Y."/>
            <person name="Togiya S."/>
            <person name="Komai F."/>
            <person name="Hara R."/>
            <person name="Takeuchi K."/>
            <person name="Arita M."/>
            <person name="Imose N."/>
            <person name="Musashino K."/>
            <person name="Yuuki H."/>
            <person name="Oshima A."/>
            <person name="Sasaki N."/>
            <person name="Aotsuka S."/>
            <person name="Yoshikawa Y."/>
            <person name="Matsunawa H."/>
            <person name="Ichihara T."/>
            <person name="Shiohata N."/>
            <person name="Sano S."/>
            <person name="Moriya S."/>
            <person name="Momiyama H."/>
            <person name="Satoh N."/>
            <person name="Takami S."/>
            <person name="Terashima Y."/>
            <person name="Suzuki O."/>
            <person name="Nakagawa S."/>
            <person name="Senoh A."/>
            <person name="Mizoguchi H."/>
            <person name="Goto Y."/>
            <person name="Shimizu F."/>
            <person name="Wakebe H."/>
            <person name="Hishigaki H."/>
            <person name="Watanabe T."/>
            <person name="Sugiyama A."/>
            <person name="Takemoto M."/>
            <person name="Kawakami B."/>
            <person name="Yamazaki M."/>
            <person name="Watanabe K."/>
            <person name="Kumagai A."/>
            <person name="Itakura S."/>
            <person name="Fukuzumi Y."/>
            <person name="Fujimori Y."/>
            <person name="Komiyama M."/>
            <person name="Tashiro H."/>
            <person name="Tanigami A."/>
            <person name="Fujiwara T."/>
            <person name="Ono T."/>
            <person name="Yamada K."/>
            <person name="Fujii Y."/>
            <person name="Ozaki K."/>
            <person name="Hirao M."/>
            <person name="Ohmori Y."/>
            <person name="Kawabata A."/>
            <person name="Hikiji T."/>
            <person name="Kobatake N."/>
            <person name="Inagaki H."/>
            <person name="Ikema Y."/>
            <person name="Okamoto S."/>
            <person name="Okitani R."/>
            <person name="Kawakami T."/>
            <person name="Noguchi S."/>
            <person name="Itoh T."/>
            <person name="Shigeta K."/>
            <person name="Senba T."/>
            <person name="Matsumura K."/>
            <person name="Nakajima Y."/>
            <person name="Mizuno T."/>
            <person name="Morinaga M."/>
            <person name="Sasaki M."/>
            <person name="Togashi T."/>
            <person name="Oyama M."/>
            <person name="Hata H."/>
            <person name="Watanabe M."/>
            <person name="Komatsu T."/>
            <person name="Mizushima-Sugano J."/>
            <person name="Satoh T."/>
            <person name="Shirai Y."/>
            <person name="Takahashi Y."/>
            <person name="Nakagawa K."/>
            <person name="Okumura K."/>
            <person name="Nagase T."/>
            <person name="Nomura N."/>
            <person name="Kikuchi H."/>
            <person name="Masuho Y."/>
            <person name="Yamashita R."/>
            <person name="Nakai K."/>
            <person name="Yada T."/>
            <person name="Nakamura Y."/>
            <person name="Ohara O."/>
            <person name="Isogai T."/>
            <person name="Sugano S."/>
        </authorList>
    </citation>
    <scope>NUCLEOTIDE SEQUENCE [LARGE SCALE MRNA] (ISOFORM 2)</scope>
    <source>
        <tissue>Brain</tissue>
    </source>
</reference>
<reference key="5">
    <citation type="journal article" date="2005" name="Nature">
        <title>Generation and annotation of the DNA sequences of human chromosomes 2 and 4.</title>
        <authorList>
            <person name="Hillier L.W."/>
            <person name="Graves T.A."/>
            <person name="Fulton R.S."/>
            <person name="Fulton L.A."/>
            <person name="Pepin K.H."/>
            <person name="Minx P."/>
            <person name="Wagner-McPherson C."/>
            <person name="Layman D."/>
            <person name="Wylie K."/>
            <person name="Sekhon M."/>
            <person name="Becker M.C."/>
            <person name="Fewell G.A."/>
            <person name="Delehaunty K.D."/>
            <person name="Miner T.L."/>
            <person name="Nash W.E."/>
            <person name="Kremitzki C."/>
            <person name="Oddy L."/>
            <person name="Du H."/>
            <person name="Sun H."/>
            <person name="Bradshaw-Cordum H."/>
            <person name="Ali J."/>
            <person name="Carter J."/>
            <person name="Cordes M."/>
            <person name="Harris A."/>
            <person name="Isak A."/>
            <person name="van Brunt A."/>
            <person name="Nguyen C."/>
            <person name="Du F."/>
            <person name="Courtney L."/>
            <person name="Kalicki J."/>
            <person name="Ozersky P."/>
            <person name="Abbott S."/>
            <person name="Armstrong J."/>
            <person name="Belter E.A."/>
            <person name="Caruso L."/>
            <person name="Cedroni M."/>
            <person name="Cotton M."/>
            <person name="Davidson T."/>
            <person name="Desai A."/>
            <person name="Elliott G."/>
            <person name="Erb T."/>
            <person name="Fronick C."/>
            <person name="Gaige T."/>
            <person name="Haakenson W."/>
            <person name="Haglund K."/>
            <person name="Holmes A."/>
            <person name="Harkins R."/>
            <person name="Kim K."/>
            <person name="Kruchowski S.S."/>
            <person name="Strong C.M."/>
            <person name="Grewal N."/>
            <person name="Goyea E."/>
            <person name="Hou S."/>
            <person name="Levy A."/>
            <person name="Martinka S."/>
            <person name="Mead K."/>
            <person name="McLellan M.D."/>
            <person name="Meyer R."/>
            <person name="Randall-Maher J."/>
            <person name="Tomlinson C."/>
            <person name="Dauphin-Kohlberg S."/>
            <person name="Kozlowicz-Reilly A."/>
            <person name="Shah N."/>
            <person name="Swearengen-Shahid S."/>
            <person name="Snider J."/>
            <person name="Strong J.T."/>
            <person name="Thompson J."/>
            <person name="Yoakum M."/>
            <person name="Leonard S."/>
            <person name="Pearman C."/>
            <person name="Trani L."/>
            <person name="Radionenko M."/>
            <person name="Waligorski J.E."/>
            <person name="Wang C."/>
            <person name="Rock S.M."/>
            <person name="Tin-Wollam A.-M."/>
            <person name="Maupin R."/>
            <person name="Latreille P."/>
            <person name="Wendl M.C."/>
            <person name="Yang S.-P."/>
            <person name="Pohl C."/>
            <person name="Wallis J.W."/>
            <person name="Spieth J."/>
            <person name="Bieri T.A."/>
            <person name="Berkowicz N."/>
            <person name="Nelson J.O."/>
            <person name="Osborne J."/>
            <person name="Ding L."/>
            <person name="Meyer R."/>
            <person name="Sabo A."/>
            <person name="Shotland Y."/>
            <person name="Sinha P."/>
            <person name="Wohldmann P.E."/>
            <person name="Cook L.L."/>
            <person name="Hickenbotham M.T."/>
            <person name="Eldred J."/>
            <person name="Williams D."/>
            <person name="Jones T.A."/>
            <person name="She X."/>
            <person name="Ciccarelli F.D."/>
            <person name="Izaurralde E."/>
            <person name="Taylor J."/>
            <person name="Schmutz J."/>
            <person name="Myers R.M."/>
            <person name="Cox D.R."/>
            <person name="Huang X."/>
            <person name="McPherson J.D."/>
            <person name="Mardis E.R."/>
            <person name="Clifton S.W."/>
            <person name="Warren W.C."/>
            <person name="Chinwalla A.T."/>
            <person name="Eddy S.R."/>
            <person name="Marra M.A."/>
            <person name="Ovcharenko I."/>
            <person name="Furey T.S."/>
            <person name="Miller W."/>
            <person name="Eichler E.E."/>
            <person name="Bork P."/>
            <person name="Suyama M."/>
            <person name="Torrents D."/>
            <person name="Waterston R.H."/>
            <person name="Wilson R.K."/>
        </authorList>
    </citation>
    <scope>NUCLEOTIDE SEQUENCE [LARGE SCALE GENOMIC DNA]</scope>
</reference>
<reference key="6">
    <citation type="journal article" date="2004" name="Genome Res.">
        <title>The status, quality, and expansion of the NIH full-length cDNA project: the Mammalian Gene Collection (MGC).</title>
        <authorList>
            <consortium name="The MGC Project Team"/>
        </authorList>
    </citation>
    <scope>NUCLEOTIDE SEQUENCE [LARGE SCALE MRNA] (ISOFORM 1)</scope>
    <source>
        <tissue>Brain</tissue>
    </source>
</reference>
<reference key="7">
    <citation type="journal article" date="2000" name="Blood">
        <title>A topological study of the human gamma-glutamyl carboxylase.</title>
        <authorList>
            <person name="Tie J."/>
            <person name="Wu S.-M."/>
            <person name="Jin D."/>
            <person name="Nicchitta C.V."/>
            <person name="Stafford D.W."/>
        </authorList>
    </citation>
    <scope>SUBCELLULAR LOCATION</scope>
    <scope>TOPOLOGY</scope>
</reference>
<reference key="8">
    <citation type="journal article" date="2001" name="Biochemistry">
        <title>A novel fluorescence assay to study propeptide interaction with gamma-glutamyl carboxylase.</title>
        <authorList>
            <person name="Presnell S.R."/>
            <person name="Tripathy A."/>
            <person name="Lentz B.R."/>
            <person name="Jin D.Y."/>
            <person name="Stafford D.W."/>
        </authorList>
    </citation>
    <scope>PROPEPTIDE INTERACTION</scope>
    <scope>MONOMER</scope>
</reference>
<reference key="9">
    <citation type="journal article" date="2003" name="J. Biol. Chem.">
        <title>Determination of disulfide bond assignment of human vitamin K-dependent gamma-glutamyl carboxylase by matrix-assisted laser desorption/ionization time-of-flight mass spectrometry.</title>
        <authorList>
            <person name="Tie J.K."/>
            <person name="Mutucumarana V.P."/>
            <person name="Straight D.L."/>
            <person name="Carrick K.L."/>
            <person name="Pope R.M."/>
            <person name="Stafford D.W."/>
        </authorList>
    </citation>
    <scope>DISULFIDE BOND</scope>
</reference>
<reference key="10">
    <citation type="journal article" date="2005" name="Annu. Rev. Nutr.">
        <title>The vitamin K-dependent carboxylase.</title>
        <authorList>
            <person name="Berkner K.L."/>
        </authorList>
    </citation>
    <scope>REVIEW</scope>
</reference>
<reference key="11">
    <citation type="journal article" date="2006" name="Biochemistry">
        <title>Bronsted analysis reveals Lys218 as the carboxylase active site base that deprotonates vitamin K hydroquinone to initiate vitamin K-dependent protein carboxylation.</title>
        <authorList>
            <person name="Rishavy M.A."/>
            <person name="Hallgren K.W."/>
            <person name="Yakubenko A.V."/>
            <person name="Shtofman R.L."/>
            <person name="Runge K.W."/>
            <person name="Berkner K.L."/>
        </authorList>
    </citation>
    <scope>MUTAGENESIS OF HIS-160; LYS-218; HIS-287 AND HIS-381</scope>
    <scope>ACTIVE SITE</scope>
    <scope>FUNCTION</scope>
    <scope>CATALYTIC ACTIVITY</scope>
    <scope>PH DEPENDENCE</scope>
    <scope>REACTION MECHANISM</scope>
</reference>
<reference key="12">
    <citation type="journal article" date="2009" name="Anal. Chem.">
        <title>Lys-N and trypsin cover complementary parts of the phosphoproteome in a refined SCX-based approach.</title>
        <authorList>
            <person name="Gauci S."/>
            <person name="Helbig A.O."/>
            <person name="Slijper M."/>
            <person name="Krijgsveld J."/>
            <person name="Heck A.J."/>
            <person name="Mohammed S."/>
        </authorList>
    </citation>
    <scope>ACETYLATION [LARGE SCALE ANALYSIS] AT ALA-2</scope>
    <scope>CLEAVAGE OF INITIATOR METHIONINE [LARGE SCALE ANALYSIS]</scope>
    <scope>IDENTIFICATION BY MASS SPECTROMETRY [LARGE SCALE ANALYSIS]</scope>
</reference>
<reference key="13">
    <citation type="journal article" date="2009" name="J. Proteome Res.">
        <title>Glycoproteomics analysis of human liver tissue by combination of multiple enzyme digestion and hydrazide chemistry.</title>
        <authorList>
            <person name="Chen R."/>
            <person name="Jiang X."/>
            <person name="Sun D."/>
            <person name="Han G."/>
            <person name="Wang F."/>
            <person name="Ye M."/>
            <person name="Wang L."/>
            <person name="Zou H."/>
        </authorList>
    </citation>
    <scope>GLYCOSYLATION [LARGE SCALE ANALYSIS] AT ASN-459 AND ASN-550</scope>
    <source>
        <tissue>Liver</tissue>
    </source>
</reference>
<reference key="14">
    <citation type="journal article" date="2011" name="Sci. Signal.">
        <title>System-wide temporal characterization of the proteome and phosphoproteome of human embryonic stem cell differentiation.</title>
        <authorList>
            <person name="Rigbolt K.T."/>
            <person name="Prokhorova T.A."/>
            <person name="Akimov V."/>
            <person name="Henningsen J."/>
            <person name="Johansen P.T."/>
            <person name="Kratchmarova I."/>
            <person name="Kassem M."/>
            <person name="Mann M."/>
            <person name="Olsen J.V."/>
            <person name="Blagoev B."/>
        </authorList>
    </citation>
    <scope>ACETYLATION [LARGE SCALE ANALYSIS] AT ALA-2</scope>
    <scope>CLEAVAGE OF INITIATOR METHIONINE [LARGE SCALE ANALYSIS]</scope>
    <scope>IDENTIFICATION BY MASS SPECTROMETRY [LARGE SCALE ANALYSIS]</scope>
</reference>
<reference key="15">
    <citation type="journal article" date="2014" name="J. Proteomics">
        <title>An enzyme assisted RP-RPLC approach for in-depth analysis of human liver phosphoproteome.</title>
        <authorList>
            <person name="Bian Y."/>
            <person name="Song C."/>
            <person name="Cheng K."/>
            <person name="Dong M."/>
            <person name="Wang F."/>
            <person name="Huang J."/>
            <person name="Sun D."/>
            <person name="Wang L."/>
            <person name="Ye M."/>
            <person name="Zou H."/>
        </authorList>
    </citation>
    <scope>IDENTIFICATION BY MASS SPECTROMETRY [LARGE SCALE ANALYSIS]</scope>
    <source>
        <tissue>Liver</tissue>
    </source>
</reference>
<reference key="16">
    <citation type="journal article" date="1998" name="Blood">
        <title>A missense mutation in gamma-glutamyl carboxylase gene causes combined deficiency of all vitamin K-dependent blood coagulation factors.</title>
        <authorList>
            <person name="Brenner B."/>
            <person name="Sanchez-Vega B."/>
            <person name="Wu S.M."/>
            <person name="Lanir N."/>
            <person name="Stafford D.W."/>
            <person name="Solera J."/>
        </authorList>
    </citation>
    <scope>VARIANT VKCFD1 ARG-394</scope>
</reference>
<reference key="17">
    <citation type="journal article" date="2000" name="Blood">
        <title>Novel mutation in the gamma-glutamyl carboxylase gene resulting in congenital combined deficiency of all vitamin K-dependent blood coagulation factors.</title>
        <authorList>
            <person name="Spronk H.M.H."/>
            <person name="Farah R.A."/>
            <person name="Buchanan G.R."/>
            <person name="Vermeer C."/>
            <person name="Soute B.A.M."/>
        </authorList>
    </citation>
    <scope>VARIANT VKCFD1 SER-501</scope>
</reference>
<reference key="18">
    <citation type="journal article" date="2000" name="J. Biol. Chem.">
        <title>Expression and characterization of the naturally occurring mutation L394R in human gamma-glutamyl carboxylase.</title>
        <authorList>
            <person name="Mutucumarana V.P."/>
            <person name="Stafford D.W."/>
            <person name="Stanley T.B."/>
            <person name="Jin D.-Y."/>
            <person name="Solera J."/>
            <person name="Brenner B."/>
            <person name="Azerad R."/>
            <person name="Wu S.-M."/>
        </authorList>
    </citation>
    <scope>CHARACTERIZATION OF VARIANT VKCFD1 ARG-394</scope>
</reference>
<reference key="19">
    <citation type="journal article" date="2004" name="Br. J. Haematol.">
        <title>Compound heterozygous mutations in the gamma-glutamyl carboxylase gene cause combined deficiency of all vitamin K-dependent blood coagulation factors.</title>
        <authorList>
            <person name="Rost S."/>
            <person name="Fregin A."/>
            <person name="Koch D."/>
            <person name="Compes M."/>
            <person name="Mueller C.R."/>
            <person name="Oldenburg J."/>
        </authorList>
    </citation>
    <scope>VARIANT VKCFD1 PRO-485</scope>
</reference>
<reference key="20">
    <citation type="journal article" date="2007" name="J. Invest. Dermatol.">
        <title>Pseudoxanthoma elasticum-like phenotype with cutis laxa and multiple coagulation factor deficiency represents a separate genetic entity.</title>
        <authorList>
            <person name="Vanakker O.M."/>
            <person name="Martin L."/>
            <person name="Gheduzzi D."/>
            <person name="Leroy B.P."/>
            <person name="Loeys B.L."/>
            <person name="Guerci V.I."/>
            <person name="Matthys D."/>
            <person name="Terry S.F."/>
            <person name="Coucke P.J."/>
            <person name="Pasquali-Ronchetti I."/>
            <person name="De Paepe A."/>
        </authorList>
    </citation>
    <scope>VARIANTS PXEL-MCFD SER-299; CYS-476; HIS-476; SER-493 AND ARG-558</scope>
</reference>
<keyword id="KW-0002">3D-structure</keyword>
<keyword id="KW-0007">Acetylation</keyword>
<keyword id="KW-0025">Alternative splicing</keyword>
<keyword id="KW-0225">Disease variant</keyword>
<keyword id="KW-1015">Disulfide bond</keyword>
<keyword id="KW-0256">Endoplasmic reticulum</keyword>
<keyword id="KW-0325">Glycoprotein</keyword>
<keyword id="KW-0456">Lyase</keyword>
<keyword id="KW-0472">Membrane</keyword>
<keyword id="KW-1267">Proteomics identification</keyword>
<keyword id="KW-1185">Reference proteome</keyword>
<keyword id="KW-0812">Transmembrane</keyword>
<keyword id="KW-1133">Transmembrane helix</keyword>
<sequence length="758" mass="87561">MAVSAGSARTSPSSDKVQKDKAELISGPRQDSRIGKLLGFEWTDLSSWRRLVTLLNRPTDPASLAVFRFLFGFLMVLDIPQERGLSSLDRKYLDGLDVCRFPLLDALRPLPLDWMYLVYTIMFLGALGMMLGLCYRISCVLFLLPYWYVFLLDKTSWNNHSYLYGLLAFQLTFMDANHYWSVDGLLNAHRRNAHVPLWNYAVLRGQIFIVYFIAGVKKLDADWVEGYSMEYLSRHWLFSPFKLLLSEELTSLLVVHWGGLLLDLSAGFLLFFDVSRSIGLFFVSYFHCMNSQLFSIGMFSYVMLASSPLFCSPEWPRKLVSYCPRRLQQLLPLKAAPQPSVSCVYKRSRGKSGQKPGLRHQLGAAFTLLYLLEQLFLPYSHFLTQGYNNWTNGLYGYSWDMMVHSRSHQHVKITYRDGRTGELGYLNPGVFTQSRRWKDHADMLKQYATCLSRLLPKYNVTEPQIYFDIWVSINDRFQQRIFDPRVDIVQAAWSPFQRTSWVQPLLMDLSPWRAKLQEIKSSLDNHTEVVFIADFPGLHLENFVSEDLGNTSIQLLQGEVTVELVAEQKNQTLREGEKMQLPAGEYHKVYTTSPSPSCYMYVYVNTTELALEQDLAYLQELKEKVENGSETGPLPPELQPLLEGEVKGGPEPTPLVQTFLRRQQRLQEIERRRNTPFHERFFRFLLRKLYVFRRSFLMTCISLRNLILGRPSLEQLAQEVTYANLRPFEAVGELNPSNTDSSHSNPPESNPDPVHSEF</sequence>
<evidence type="ECO:0000250" key="1">
    <source>
        <dbReference type="UniProtKB" id="O88496"/>
    </source>
</evidence>
<evidence type="ECO:0000255" key="2"/>
<evidence type="ECO:0000256" key="3">
    <source>
        <dbReference type="SAM" id="MobiDB-lite"/>
    </source>
</evidence>
<evidence type="ECO:0000269" key="4">
    <source>
    </source>
</evidence>
<evidence type="ECO:0000269" key="5">
    <source>
    </source>
</evidence>
<evidence type="ECO:0000269" key="6">
    <source>
    </source>
</evidence>
<evidence type="ECO:0000269" key="7">
    <source>
    </source>
</evidence>
<evidence type="ECO:0000269" key="8">
    <source>
    </source>
</evidence>
<evidence type="ECO:0000269" key="9">
    <source>
    </source>
</evidence>
<evidence type="ECO:0000269" key="10">
    <source>
    </source>
</evidence>
<evidence type="ECO:0000269" key="11">
    <source>
    </source>
</evidence>
<evidence type="ECO:0000269" key="12">
    <source>
    </source>
</evidence>
<evidence type="ECO:0000269" key="13">
    <source>
    </source>
</evidence>
<evidence type="ECO:0000269" key="14">
    <source>
    </source>
</evidence>
<evidence type="ECO:0000303" key="15">
    <source>
    </source>
</evidence>
<evidence type="ECO:0000305" key="16"/>
<evidence type="ECO:0007744" key="17">
    <source>
    </source>
</evidence>
<evidence type="ECO:0007744" key="18">
    <source>
    </source>
</evidence>
<gene>
    <name type="primary">GGCX</name>
    <name type="synonym">GC</name>
</gene>
<organism>
    <name type="scientific">Homo sapiens</name>
    <name type="common">Human</name>
    <dbReference type="NCBI Taxonomy" id="9606"/>
    <lineage>
        <taxon>Eukaryota</taxon>
        <taxon>Metazoa</taxon>
        <taxon>Chordata</taxon>
        <taxon>Craniata</taxon>
        <taxon>Vertebrata</taxon>
        <taxon>Euteleostomi</taxon>
        <taxon>Mammalia</taxon>
        <taxon>Eutheria</taxon>
        <taxon>Euarchontoglires</taxon>
        <taxon>Primates</taxon>
        <taxon>Haplorrhini</taxon>
        <taxon>Catarrhini</taxon>
        <taxon>Hominidae</taxon>
        <taxon>Homo</taxon>
    </lineage>
</organism>
<comment type="function">
    <text evidence="10">Mediates the vitamin K-dependent carboxylation of glutamate residues to calcium-binding gamma-carboxyglutamate (Gla) residues with the concomitant conversion of the reduced hydroquinone form of vitamin K to vitamin K epoxide (PubMed:17073445). Catalyzes gamma-carboxylation of various proteins, such as blood coagulation factors (F2, F7, F9 and F10), osteocalcin (BGLAP) or matrix Gla protein (MGP) (PubMed:17073445).</text>
</comment>
<comment type="catalytic activity">
    <reaction evidence="10">
        <text>4-carboxy-L-glutamyl-[protein] + 2,3-epoxyphylloquinone + H2O + H(+) = phylloquinol + L-glutamyl-[protein] + CO2 + O2</text>
        <dbReference type="Rhea" id="RHEA:45140"/>
        <dbReference type="Rhea" id="RHEA-COMP:10208"/>
        <dbReference type="Rhea" id="RHEA-COMP:11094"/>
        <dbReference type="ChEBI" id="CHEBI:15377"/>
        <dbReference type="ChEBI" id="CHEBI:15378"/>
        <dbReference type="ChEBI" id="CHEBI:15379"/>
        <dbReference type="ChEBI" id="CHEBI:15759"/>
        <dbReference type="ChEBI" id="CHEBI:16526"/>
        <dbReference type="ChEBI" id="CHEBI:28433"/>
        <dbReference type="ChEBI" id="CHEBI:29973"/>
        <dbReference type="ChEBI" id="CHEBI:84990"/>
        <dbReference type="EC" id="4.1.1.90"/>
    </reaction>
    <physiologicalReaction direction="right-to-left" evidence="10">
        <dbReference type="Rhea" id="RHEA:45142"/>
    </physiologicalReaction>
</comment>
<comment type="biophysicochemical properties">
    <phDependence>
        <text evidence="10">Optimum pH is 7.</text>
    </phDependence>
</comment>
<comment type="subunit">
    <text evidence="1 7">Monomer (PubMed:11570873). May interact with CALU (By similarity).</text>
</comment>
<comment type="subcellular location">
    <subcellularLocation>
        <location evidence="4">Endoplasmic reticulum membrane</location>
        <topology evidence="4">Multi-pass membrane protein</topology>
    </subcellularLocation>
</comment>
<comment type="alternative products">
    <event type="alternative splicing"/>
    <isoform>
        <id>P38435-1</id>
        <name>1</name>
        <sequence type="displayed"/>
    </isoform>
    <isoform>
        <id>P38435-2</id>
        <name>2</name>
        <sequence type="described" ref="VSP_046179"/>
    </isoform>
</comment>
<comment type="disease" evidence="5 6 9 14">
    <disease id="DI-01361">
        <name>Combined deficiency of vitamin K-dependent clotting factors 1</name>
        <acronym>VKCFD1</acronym>
        <description>VKCFD leads to a bleeding tendency that is usually reversed by oral administration of vitamin K.</description>
        <dbReference type="MIM" id="277450"/>
    </disease>
    <text>The disease is caused by variants affecting the gene represented in this entry.</text>
</comment>
<comment type="disease" evidence="11">
    <disease id="DI-02234">
        <name>Pseudoxanthoma elasticum-like disorder with multiple coagulation factor deficiency</name>
        <acronym>PXEL-MCFD</acronym>
        <description>Characterized by hyperlaxity of the skin involving the entire body. Important phenotypic differences with classical PXE include much more severe skin laxity with spreading toward the trunk and limbs with thick, leathery skin folds rather than confinement to flexural areas, and no decrease in visual acuity. Moreover, detailed electron microscopic analyses revealed that alterations of elastic fibers as well as their mineralization are slightly different from those in classic PXE.</description>
        <dbReference type="MIM" id="610842"/>
    </disease>
    <text>The disease is caused by variants affecting the gene represented in this entry.</text>
</comment>
<comment type="miscellaneous">
    <text>The vitamin K-dependent protein substrates of carboxylase have usually a propeptide that binds to a high-affinity site on the carboxylase. CO(2), O(2) and reduced vitamin K are cosubstrates.</text>
</comment>
<comment type="similarity">
    <text evidence="16">Belongs to the vitamin K-dependent gamma-carboxylase family.</text>
</comment>
<dbReference type="EC" id="4.1.1.90" evidence="10"/>
<dbReference type="EMBL" id="M81592">
    <property type="protein sequence ID" value="AAA58643.1"/>
    <property type="molecule type" value="mRNA"/>
</dbReference>
<dbReference type="EMBL" id="U65896">
    <property type="protein sequence ID" value="AAB39832.1"/>
    <property type="molecule type" value="Genomic_DNA"/>
</dbReference>
<dbReference type="EMBL" id="L17128">
    <property type="protein sequence ID" value="AAA91834.1"/>
    <property type="molecule type" value="mRNA"/>
</dbReference>
<dbReference type="EMBL" id="AK297397">
    <property type="protein sequence ID" value="BAG59837.1"/>
    <property type="molecule type" value="mRNA"/>
</dbReference>
<dbReference type="EMBL" id="AC016753">
    <property type="protein sequence ID" value="AAY24340.1"/>
    <property type="molecule type" value="Genomic_DNA"/>
</dbReference>
<dbReference type="EMBL" id="BC013979">
    <property type="protein sequence ID" value="AAH13979.1"/>
    <property type="molecule type" value="mRNA"/>
</dbReference>
<dbReference type="CCDS" id="CCDS1978.1">
    <molecule id="P38435-1"/>
</dbReference>
<dbReference type="CCDS" id="CCDS46353.1">
    <molecule id="P38435-2"/>
</dbReference>
<dbReference type="PIR" id="A39283">
    <property type="entry name" value="A39283"/>
</dbReference>
<dbReference type="RefSeq" id="NP_000812.2">
    <molecule id="P38435-1"/>
    <property type="nucleotide sequence ID" value="NM_000821.6"/>
</dbReference>
<dbReference type="RefSeq" id="NP_001135741.1">
    <molecule id="P38435-2"/>
    <property type="nucleotide sequence ID" value="NM_001142269.4"/>
</dbReference>
<dbReference type="PDB" id="9BUM">
    <property type="method" value="EM"/>
    <property type="resolution" value="3.63 A"/>
    <property type="chains" value="A=1-758"/>
</dbReference>
<dbReference type="PDB" id="9BUR">
    <property type="method" value="EM"/>
    <property type="resolution" value="2.95 A"/>
    <property type="chains" value="A=1-758"/>
</dbReference>
<dbReference type="PDB" id="9BUX">
    <property type="method" value="EM"/>
    <property type="resolution" value="3.06 A"/>
    <property type="chains" value="A=1-758"/>
</dbReference>
<dbReference type="PDB" id="9BVK">
    <property type="method" value="EM"/>
    <property type="resolution" value="3.60 A"/>
    <property type="chains" value="A=27-758"/>
</dbReference>
<dbReference type="PDB" id="9BVL">
    <property type="method" value="EM"/>
    <property type="resolution" value="3.40 A"/>
    <property type="chains" value="A=27-758"/>
</dbReference>
<dbReference type="PDB" id="9BVM">
    <property type="method" value="EM"/>
    <property type="resolution" value="3.40 A"/>
    <property type="chains" value="A=27-758"/>
</dbReference>
<dbReference type="PDB" id="9BVO">
    <property type="method" value="EM"/>
    <property type="resolution" value="4.40 A"/>
    <property type="chains" value="A=27-758"/>
</dbReference>
<dbReference type="PDB" id="9BVP">
    <property type="method" value="EM"/>
    <property type="resolution" value="3.30 A"/>
    <property type="chains" value="A=26-758"/>
</dbReference>
<dbReference type="PDB" id="9BVQ">
    <property type="method" value="EM"/>
    <property type="resolution" value="3.30 A"/>
    <property type="chains" value="A=27-758"/>
</dbReference>
<dbReference type="PDB" id="9BVR">
    <property type="method" value="EM"/>
    <property type="resolution" value="3.50 A"/>
    <property type="chains" value="A=27-758"/>
</dbReference>
<dbReference type="PDBsum" id="9BUM"/>
<dbReference type="PDBsum" id="9BUR"/>
<dbReference type="PDBsum" id="9BUX"/>
<dbReference type="PDBsum" id="9BVK"/>
<dbReference type="PDBsum" id="9BVL"/>
<dbReference type="PDBsum" id="9BVM"/>
<dbReference type="PDBsum" id="9BVO"/>
<dbReference type="PDBsum" id="9BVP"/>
<dbReference type="PDBsum" id="9BVQ"/>
<dbReference type="PDBsum" id="9BVR"/>
<dbReference type="EMDB" id="EMD-44912"/>
<dbReference type="EMDB" id="EMD-44917"/>
<dbReference type="EMDB" id="EMD-44924"/>
<dbReference type="EMDB" id="EMD-44935"/>
<dbReference type="EMDB" id="EMD-44936"/>
<dbReference type="EMDB" id="EMD-44937"/>
<dbReference type="EMDB" id="EMD-44939"/>
<dbReference type="EMDB" id="EMD-44940"/>
<dbReference type="EMDB" id="EMD-44941"/>
<dbReference type="EMDB" id="EMD-44942"/>
<dbReference type="SMR" id="P38435"/>
<dbReference type="BioGRID" id="108945">
    <property type="interactions" value="102"/>
</dbReference>
<dbReference type="FunCoup" id="P38435">
    <property type="interactions" value="941"/>
</dbReference>
<dbReference type="IntAct" id="P38435">
    <property type="interactions" value="64"/>
</dbReference>
<dbReference type="MINT" id="P38435"/>
<dbReference type="STRING" id="9606.ENSP00000233838"/>
<dbReference type="ChEMBL" id="CHEMBL2012"/>
<dbReference type="DrugBank" id="DB01125">
    <property type="generic name" value="Anisindione"/>
</dbReference>
<dbReference type="DrugBank" id="DB00100">
    <property type="generic name" value="Coagulation Factor IX (Recombinant)"/>
</dbReference>
<dbReference type="DrugBank" id="DB13152">
    <property type="generic name" value="Coagulation Factor IX Human"/>
</dbReference>
<dbReference type="DrugBank" id="DB00142">
    <property type="generic name" value="Glutamic acid"/>
</dbReference>
<dbReference type="DrugBank" id="DB09332">
    <property type="generic name" value="Kappadione"/>
</dbReference>
<dbReference type="DrugBank" id="DB00170">
    <property type="generic name" value="Menadione"/>
</dbReference>
<dbReference type="DrugBank" id="DB01022">
    <property type="generic name" value="Phylloquinone"/>
</dbReference>
<dbReference type="DrugCentral" id="P38435"/>
<dbReference type="GlyConnect" id="1894">
    <property type="glycosylation" value="1 N-Linked glycan (1 site)"/>
</dbReference>
<dbReference type="GlyCosmos" id="P38435">
    <property type="glycosylation" value="4 sites, 3 glycans"/>
</dbReference>
<dbReference type="GlyGen" id="P38435">
    <property type="glycosylation" value="5 sites, 5 N-linked glycans (1 site), 2 O-linked glycans (1 site)"/>
</dbReference>
<dbReference type="iPTMnet" id="P38435"/>
<dbReference type="PhosphoSitePlus" id="P38435"/>
<dbReference type="SwissPalm" id="P38435"/>
<dbReference type="BioMuta" id="GGCX"/>
<dbReference type="DMDM" id="84028279"/>
<dbReference type="jPOST" id="P38435"/>
<dbReference type="MassIVE" id="P38435"/>
<dbReference type="PaxDb" id="9606-ENSP00000233838"/>
<dbReference type="PeptideAtlas" id="P38435"/>
<dbReference type="ProteomicsDB" id="19868"/>
<dbReference type="ProteomicsDB" id="55296">
    <molecule id="P38435-1"/>
</dbReference>
<dbReference type="Pumba" id="P38435"/>
<dbReference type="Antibodypedia" id="16941">
    <property type="antibodies" value="277 antibodies from 34 providers"/>
</dbReference>
<dbReference type="DNASU" id="2677"/>
<dbReference type="Ensembl" id="ENST00000233838.9">
    <molecule id="P38435-1"/>
    <property type="protein sequence ID" value="ENSP00000233838.3"/>
    <property type="gene ID" value="ENSG00000115486.13"/>
</dbReference>
<dbReference type="Ensembl" id="ENST00000430215.7">
    <molecule id="P38435-2"/>
    <property type="protein sequence ID" value="ENSP00000408045.3"/>
    <property type="gene ID" value="ENSG00000115486.13"/>
</dbReference>
<dbReference type="GeneID" id="2677"/>
<dbReference type="KEGG" id="hsa:2677"/>
<dbReference type="MANE-Select" id="ENST00000233838.9">
    <property type="protein sequence ID" value="ENSP00000233838.3"/>
    <property type="RefSeq nucleotide sequence ID" value="NM_000821.7"/>
    <property type="RefSeq protein sequence ID" value="NP_000812.2"/>
</dbReference>
<dbReference type="UCSC" id="uc002sps.4">
    <molecule id="P38435-1"/>
    <property type="organism name" value="human"/>
</dbReference>
<dbReference type="AGR" id="HGNC:4247"/>
<dbReference type="CTD" id="2677"/>
<dbReference type="DisGeNET" id="2677"/>
<dbReference type="GeneCards" id="GGCX"/>
<dbReference type="HGNC" id="HGNC:4247">
    <property type="gene designation" value="GGCX"/>
</dbReference>
<dbReference type="HPA" id="ENSG00000115486">
    <property type="expression patterns" value="Tissue enriched (liver)"/>
</dbReference>
<dbReference type="MalaCards" id="GGCX"/>
<dbReference type="MIM" id="137167">
    <property type="type" value="gene"/>
</dbReference>
<dbReference type="MIM" id="277450">
    <property type="type" value="phenotype"/>
</dbReference>
<dbReference type="MIM" id="610842">
    <property type="type" value="phenotype"/>
</dbReference>
<dbReference type="neXtProt" id="NX_P38435"/>
<dbReference type="OpenTargets" id="ENSG00000115486"/>
<dbReference type="Orphanet" id="91135">
    <property type="disease" value="Body skin hyperlaxity due to vitamin K-dependent coagulation factor deficiency"/>
</dbReference>
<dbReference type="Orphanet" id="98434">
    <property type="disease" value="Hereditary combined deficiency of vitamin K-dependent clotting factors"/>
</dbReference>
<dbReference type="Orphanet" id="436274">
    <property type="disease" value="Pseudoxanthoma elasticum-like skin manifestations with retinitis pigmentosa"/>
</dbReference>
<dbReference type="PharmGKB" id="PA28660"/>
<dbReference type="VEuPathDB" id="HostDB:ENSG00000115486"/>
<dbReference type="eggNOG" id="ENOG502QRU2">
    <property type="taxonomic scope" value="Eukaryota"/>
</dbReference>
<dbReference type="GeneTree" id="ENSGT00390000014909"/>
<dbReference type="HOGENOM" id="CLU_020495_0_0_1"/>
<dbReference type="InParanoid" id="P38435"/>
<dbReference type="OMA" id="TYLNHYY"/>
<dbReference type="OrthoDB" id="206689at2759"/>
<dbReference type="PAN-GO" id="P38435">
    <property type="GO annotations" value="3 GO annotations based on evolutionary models"/>
</dbReference>
<dbReference type="PhylomeDB" id="P38435"/>
<dbReference type="TreeFam" id="TF323879"/>
<dbReference type="BioCyc" id="MetaCyc:HS03897-MONOMER"/>
<dbReference type="BRENDA" id="4.1.1.90">
    <property type="organism ID" value="2681"/>
</dbReference>
<dbReference type="PathwayCommons" id="P38435"/>
<dbReference type="Reactome" id="R-HSA-159740">
    <property type="pathway name" value="Gamma-carboxylation of protein precursors"/>
</dbReference>
<dbReference type="Reactome" id="R-HSA-9673240">
    <property type="pathway name" value="Defective gamma-carboxylation of F9"/>
</dbReference>
<dbReference type="SignaLink" id="P38435"/>
<dbReference type="SIGNOR" id="P38435"/>
<dbReference type="BioGRID-ORCS" id="2677">
    <property type="hits" value="14 hits in 1167 CRISPR screens"/>
</dbReference>
<dbReference type="ChiTaRS" id="GGCX">
    <property type="organism name" value="human"/>
</dbReference>
<dbReference type="GeneWiki" id="Gamma-glutamyl_carboxylase"/>
<dbReference type="GenomeRNAi" id="2677"/>
<dbReference type="Pharos" id="P38435">
    <property type="development level" value="Tclin"/>
</dbReference>
<dbReference type="PRO" id="PR:P38435"/>
<dbReference type="Proteomes" id="UP000005640">
    <property type="component" value="Chromosome 2"/>
</dbReference>
<dbReference type="RNAct" id="P38435">
    <property type="molecule type" value="protein"/>
</dbReference>
<dbReference type="Bgee" id="ENSG00000115486">
    <property type="expression patterns" value="Expressed in buccal mucosa cell and 207 other cell types or tissues"/>
</dbReference>
<dbReference type="ExpressionAtlas" id="P38435">
    <property type="expression patterns" value="baseline and differential"/>
</dbReference>
<dbReference type="GO" id="GO:0005788">
    <property type="term" value="C:endoplasmic reticulum lumen"/>
    <property type="evidence" value="ECO:0007669"/>
    <property type="project" value="Ensembl"/>
</dbReference>
<dbReference type="GO" id="GO:0005789">
    <property type="term" value="C:endoplasmic reticulum membrane"/>
    <property type="evidence" value="ECO:0000314"/>
    <property type="project" value="UniProt"/>
</dbReference>
<dbReference type="GO" id="GO:0016020">
    <property type="term" value="C:membrane"/>
    <property type="evidence" value="ECO:0000304"/>
    <property type="project" value="ProtInc"/>
</dbReference>
<dbReference type="GO" id="GO:0008488">
    <property type="term" value="F:gamma-glutamyl carboxylase activity"/>
    <property type="evidence" value="ECO:0000314"/>
    <property type="project" value="UniProt"/>
</dbReference>
<dbReference type="GO" id="GO:0019842">
    <property type="term" value="F:vitamin binding"/>
    <property type="evidence" value="ECO:0000318"/>
    <property type="project" value="GO_Central"/>
</dbReference>
<dbReference type="GO" id="GO:0007596">
    <property type="term" value="P:blood coagulation"/>
    <property type="evidence" value="ECO:0000304"/>
    <property type="project" value="ProtInc"/>
</dbReference>
<dbReference type="GO" id="GO:1903011">
    <property type="term" value="P:negative regulation of bone development"/>
    <property type="evidence" value="ECO:0007669"/>
    <property type="project" value="Ensembl"/>
</dbReference>
<dbReference type="GO" id="GO:0046929">
    <property type="term" value="P:negative regulation of neurotransmitter secretion"/>
    <property type="evidence" value="ECO:0000314"/>
    <property type="project" value="UniProt"/>
</dbReference>
<dbReference type="GO" id="GO:2000225">
    <property type="term" value="P:negative regulation of testosterone biosynthetic process"/>
    <property type="evidence" value="ECO:0007669"/>
    <property type="project" value="Ensembl"/>
</dbReference>
<dbReference type="GO" id="GO:0051604">
    <property type="term" value="P:protein maturation"/>
    <property type="evidence" value="ECO:0007669"/>
    <property type="project" value="Ensembl"/>
</dbReference>
<dbReference type="GO" id="GO:0036211">
    <property type="term" value="P:protein modification process"/>
    <property type="evidence" value="ECO:0000304"/>
    <property type="project" value="ProtInc"/>
</dbReference>
<dbReference type="GO" id="GO:0042373">
    <property type="term" value="P:vitamin K metabolic process"/>
    <property type="evidence" value="ECO:0000314"/>
    <property type="project" value="UniProt"/>
</dbReference>
<dbReference type="Gene3D" id="2.60.120.10">
    <property type="entry name" value="Jelly Rolls"/>
    <property type="match status" value="1"/>
</dbReference>
<dbReference type="InterPro" id="IPR011020">
    <property type="entry name" value="HTTM-like"/>
</dbReference>
<dbReference type="InterPro" id="IPR053934">
    <property type="entry name" value="HTTM_dom"/>
</dbReference>
<dbReference type="InterPro" id="IPR014710">
    <property type="entry name" value="RmlC-like_jellyroll"/>
</dbReference>
<dbReference type="InterPro" id="IPR011051">
    <property type="entry name" value="RmlC_Cupin_sf"/>
</dbReference>
<dbReference type="InterPro" id="IPR007782">
    <property type="entry name" value="VKG_COase"/>
</dbReference>
<dbReference type="InterPro" id="IPR053935">
    <property type="entry name" value="VKGC_lumenal_dom"/>
</dbReference>
<dbReference type="PANTHER" id="PTHR12639">
    <property type="entry name" value="VITAMIN K-DEPENDENT GAMMA-CARBOXYLASE"/>
    <property type="match status" value="1"/>
</dbReference>
<dbReference type="PANTHER" id="PTHR12639:SF6">
    <property type="entry name" value="VITAMIN K-DEPENDENT GAMMA-CARBOXYLASE"/>
    <property type="match status" value="1"/>
</dbReference>
<dbReference type="Pfam" id="PF05090">
    <property type="entry name" value="HTTM"/>
    <property type="match status" value="1"/>
</dbReference>
<dbReference type="Pfam" id="PF22777">
    <property type="entry name" value="VKGC_lumenal_dom"/>
    <property type="match status" value="1"/>
</dbReference>
<dbReference type="SMART" id="SM00752">
    <property type="entry name" value="HTTM"/>
    <property type="match status" value="1"/>
</dbReference>
<dbReference type="SUPFAM" id="SSF51182">
    <property type="entry name" value="RmlC-like cupins"/>
    <property type="match status" value="1"/>
</dbReference>